<proteinExistence type="inferred from homology"/>
<sequence>MSHVLAAVAWPYANGPRHIGHVSGFGVPSDVFARYMRMTGHDVLMVSGTDEHGTPIQVQADAEGVTPRELADRYNRVIVADLHGLGLSYDLFTRTTTRNHYAVVQELFEGMYRNGYIVPKTTMGAISPSTGRTLPDRYIEGTCPICGYESARGDQCDSCGNQLDPIDLRNPKSKINGETPEFIETEHFFLDLPALAGVLRQWLDTREGWRPNVLRFSKNLLDDLQPRAITRDLEWGVPIPLEGWRDRGDKRIYVWFDAVIGYLSASIEWARRSGDPEAWRRWWSADGQGKDAPGYYFMGKDNIVFHSVIWPALLAGYSGEGSRDGQPGELGRMNLPTEVVSSEFLTMEGRKFSSSRRVVIYVRDFLERYDADALRYFIAVAGPESNDTDFTWAEFLRRNNDELVAGWGNLVNRSISMAAKNFGAIPPVDPAGLTEADEALLAVARAGFGAVGELIGRHRQKQAIGEAMKVVAEANRYLSEQAPWKLKSEADRPRMGTILHVALQVVSDANTLLTPFLPHSAQKIHELLGGTGVHAPMPVVEEVEDLDGGPAYPVLTGDYSVGARWESVPLEVGRPLDPPKPVFRKLDPSIVDEELARLAG</sequence>
<name>SYM_SALAI</name>
<organism>
    <name type="scientific">Salinispora arenicola (strain CNS-205)</name>
    <dbReference type="NCBI Taxonomy" id="391037"/>
    <lineage>
        <taxon>Bacteria</taxon>
        <taxon>Bacillati</taxon>
        <taxon>Actinomycetota</taxon>
        <taxon>Actinomycetes</taxon>
        <taxon>Micromonosporales</taxon>
        <taxon>Micromonosporaceae</taxon>
        <taxon>Salinispora</taxon>
    </lineage>
</organism>
<reference key="1">
    <citation type="submission" date="2007-10" db="EMBL/GenBank/DDBJ databases">
        <title>Complete sequence of Salinispora arenicola CNS-205.</title>
        <authorList>
            <consortium name="US DOE Joint Genome Institute"/>
            <person name="Copeland A."/>
            <person name="Lucas S."/>
            <person name="Lapidus A."/>
            <person name="Barry K."/>
            <person name="Glavina del Rio T."/>
            <person name="Dalin E."/>
            <person name="Tice H."/>
            <person name="Pitluck S."/>
            <person name="Foster B."/>
            <person name="Schmutz J."/>
            <person name="Larimer F."/>
            <person name="Land M."/>
            <person name="Hauser L."/>
            <person name="Kyrpides N."/>
            <person name="Ivanova N."/>
            <person name="Jensen P.R."/>
            <person name="Moore B.S."/>
            <person name="Penn K."/>
            <person name="Jenkins C."/>
            <person name="Udwary D."/>
            <person name="Xiang L."/>
            <person name="Gontang E."/>
            <person name="Richardson P."/>
        </authorList>
    </citation>
    <scope>NUCLEOTIDE SEQUENCE [LARGE SCALE GENOMIC DNA]</scope>
    <source>
        <strain>CNS-205</strain>
    </source>
</reference>
<protein>
    <recommendedName>
        <fullName evidence="1">Methionine--tRNA ligase</fullName>
        <ecNumber evidence="1">6.1.1.10</ecNumber>
    </recommendedName>
    <alternativeName>
        <fullName evidence="1">Methionyl-tRNA synthetase</fullName>
        <shortName evidence="1">MetRS</shortName>
    </alternativeName>
</protein>
<keyword id="KW-0030">Aminoacyl-tRNA synthetase</keyword>
<keyword id="KW-0067">ATP-binding</keyword>
<keyword id="KW-0963">Cytoplasm</keyword>
<keyword id="KW-0436">Ligase</keyword>
<keyword id="KW-0479">Metal-binding</keyword>
<keyword id="KW-0547">Nucleotide-binding</keyword>
<keyword id="KW-0648">Protein biosynthesis</keyword>
<keyword id="KW-0862">Zinc</keyword>
<accession>A8M218</accession>
<feature type="chain" id="PRO_0000331897" description="Methionine--tRNA ligase">
    <location>
        <begin position="1"/>
        <end position="600"/>
    </location>
</feature>
<feature type="short sequence motif" description="'HIGH' region">
    <location>
        <begin position="11"/>
        <end position="21"/>
    </location>
</feature>
<feature type="short sequence motif" description="'KMSKS' region">
    <location>
        <begin position="351"/>
        <end position="355"/>
    </location>
</feature>
<feature type="binding site" evidence="1">
    <location>
        <position position="143"/>
    </location>
    <ligand>
        <name>Zn(2+)</name>
        <dbReference type="ChEBI" id="CHEBI:29105"/>
    </ligand>
</feature>
<feature type="binding site" evidence="1">
    <location>
        <position position="146"/>
    </location>
    <ligand>
        <name>Zn(2+)</name>
        <dbReference type="ChEBI" id="CHEBI:29105"/>
    </ligand>
</feature>
<feature type="binding site" evidence="1">
    <location>
        <position position="156"/>
    </location>
    <ligand>
        <name>Zn(2+)</name>
        <dbReference type="ChEBI" id="CHEBI:29105"/>
    </ligand>
</feature>
<feature type="binding site" evidence="1">
    <location>
        <position position="159"/>
    </location>
    <ligand>
        <name>Zn(2+)</name>
        <dbReference type="ChEBI" id="CHEBI:29105"/>
    </ligand>
</feature>
<feature type="binding site" evidence="1">
    <location>
        <position position="354"/>
    </location>
    <ligand>
        <name>ATP</name>
        <dbReference type="ChEBI" id="CHEBI:30616"/>
    </ligand>
</feature>
<comment type="function">
    <text evidence="1">Is required not only for elongation of protein synthesis but also for the initiation of all mRNA translation through initiator tRNA(fMet) aminoacylation.</text>
</comment>
<comment type="catalytic activity">
    <reaction evidence="1">
        <text>tRNA(Met) + L-methionine + ATP = L-methionyl-tRNA(Met) + AMP + diphosphate</text>
        <dbReference type="Rhea" id="RHEA:13481"/>
        <dbReference type="Rhea" id="RHEA-COMP:9667"/>
        <dbReference type="Rhea" id="RHEA-COMP:9698"/>
        <dbReference type="ChEBI" id="CHEBI:30616"/>
        <dbReference type="ChEBI" id="CHEBI:33019"/>
        <dbReference type="ChEBI" id="CHEBI:57844"/>
        <dbReference type="ChEBI" id="CHEBI:78442"/>
        <dbReference type="ChEBI" id="CHEBI:78530"/>
        <dbReference type="ChEBI" id="CHEBI:456215"/>
        <dbReference type="EC" id="6.1.1.10"/>
    </reaction>
</comment>
<comment type="cofactor">
    <cofactor evidence="1">
        <name>Zn(2+)</name>
        <dbReference type="ChEBI" id="CHEBI:29105"/>
    </cofactor>
    <text evidence="1">Binds 1 zinc ion per subunit.</text>
</comment>
<comment type="subunit">
    <text evidence="1">Monomer.</text>
</comment>
<comment type="subcellular location">
    <subcellularLocation>
        <location evidence="1">Cytoplasm</location>
    </subcellularLocation>
</comment>
<comment type="similarity">
    <text evidence="1">Belongs to the class-I aminoacyl-tRNA synthetase family. MetG type 1 subfamily.</text>
</comment>
<gene>
    <name evidence="1" type="primary">metG</name>
    <name type="ordered locus">Sare_0722</name>
</gene>
<dbReference type="EC" id="6.1.1.10" evidence="1"/>
<dbReference type="EMBL" id="CP000850">
    <property type="protein sequence ID" value="ABV96641.1"/>
    <property type="molecule type" value="Genomic_DNA"/>
</dbReference>
<dbReference type="SMR" id="A8M218"/>
<dbReference type="STRING" id="391037.Sare_0722"/>
<dbReference type="KEGG" id="saq:Sare_0722"/>
<dbReference type="PATRIC" id="fig|391037.6.peg.737"/>
<dbReference type="eggNOG" id="COG0143">
    <property type="taxonomic scope" value="Bacteria"/>
</dbReference>
<dbReference type="HOGENOM" id="CLU_009710_1_2_11"/>
<dbReference type="OrthoDB" id="9810191at2"/>
<dbReference type="GO" id="GO:0005829">
    <property type="term" value="C:cytosol"/>
    <property type="evidence" value="ECO:0007669"/>
    <property type="project" value="TreeGrafter"/>
</dbReference>
<dbReference type="GO" id="GO:0005524">
    <property type="term" value="F:ATP binding"/>
    <property type="evidence" value="ECO:0007669"/>
    <property type="project" value="UniProtKB-UniRule"/>
</dbReference>
<dbReference type="GO" id="GO:0046872">
    <property type="term" value="F:metal ion binding"/>
    <property type="evidence" value="ECO:0007669"/>
    <property type="project" value="UniProtKB-KW"/>
</dbReference>
<dbReference type="GO" id="GO:0004825">
    <property type="term" value="F:methionine-tRNA ligase activity"/>
    <property type="evidence" value="ECO:0007669"/>
    <property type="project" value="UniProtKB-UniRule"/>
</dbReference>
<dbReference type="GO" id="GO:0006431">
    <property type="term" value="P:methionyl-tRNA aminoacylation"/>
    <property type="evidence" value="ECO:0007669"/>
    <property type="project" value="UniProtKB-UniRule"/>
</dbReference>
<dbReference type="CDD" id="cd07957">
    <property type="entry name" value="Anticodon_Ia_Met"/>
    <property type="match status" value="1"/>
</dbReference>
<dbReference type="CDD" id="cd00814">
    <property type="entry name" value="MetRS_core"/>
    <property type="match status" value="1"/>
</dbReference>
<dbReference type="FunFam" id="2.20.28.20:FF:000001">
    <property type="entry name" value="Methionine--tRNA ligase"/>
    <property type="match status" value="1"/>
</dbReference>
<dbReference type="Gene3D" id="3.40.50.620">
    <property type="entry name" value="HUPs"/>
    <property type="match status" value="1"/>
</dbReference>
<dbReference type="Gene3D" id="1.10.730.10">
    <property type="entry name" value="Isoleucyl-tRNA Synthetase, Domain 1"/>
    <property type="match status" value="1"/>
</dbReference>
<dbReference type="Gene3D" id="2.20.28.20">
    <property type="entry name" value="Methionyl-tRNA synthetase, Zn-domain"/>
    <property type="match status" value="1"/>
</dbReference>
<dbReference type="HAMAP" id="MF_00098">
    <property type="entry name" value="Met_tRNA_synth_type1"/>
    <property type="match status" value="1"/>
</dbReference>
<dbReference type="InterPro" id="IPR041872">
    <property type="entry name" value="Anticodon_Met"/>
</dbReference>
<dbReference type="InterPro" id="IPR023458">
    <property type="entry name" value="Met-tRNA_ligase_1"/>
</dbReference>
<dbReference type="InterPro" id="IPR014758">
    <property type="entry name" value="Met-tRNA_synth"/>
</dbReference>
<dbReference type="InterPro" id="IPR015413">
    <property type="entry name" value="Methionyl/Leucyl_tRNA_Synth"/>
</dbReference>
<dbReference type="InterPro" id="IPR033911">
    <property type="entry name" value="MetRS_core"/>
</dbReference>
<dbReference type="InterPro" id="IPR029038">
    <property type="entry name" value="MetRS_Zn"/>
</dbReference>
<dbReference type="InterPro" id="IPR014729">
    <property type="entry name" value="Rossmann-like_a/b/a_fold"/>
</dbReference>
<dbReference type="InterPro" id="IPR009080">
    <property type="entry name" value="tRNAsynth_Ia_anticodon-bd"/>
</dbReference>
<dbReference type="NCBIfam" id="TIGR00398">
    <property type="entry name" value="metG"/>
    <property type="match status" value="1"/>
</dbReference>
<dbReference type="PANTHER" id="PTHR45765">
    <property type="entry name" value="METHIONINE--TRNA LIGASE"/>
    <property type="match status" value="1"/>
</dbReference>
<dbReference type="PANTHER" id="PTHR45765:SF1">
    <property type="entry name" value="METHIONINE--TRNA LIGASE, CYTOPLASMIC"/>
    <property type="match status" value="1"/>
</dbReference>
<dbReference type="Pfam" id="PF19303">
    <property type="entry name" value="Anticodon_3"/>
    <property type="match status" value="1"/>
</dbReference>
<dbReference type="Pfam" id="PF09334">
    <property type="entry name" value="tRNA-synt_1g"/>
    <property type="match status" value="1"/>
</dbReference>
<dbReference type="PRINTS" id="PR01041">
    <property type="entry name" value="TRNASYNTHMET"/>
</dbReference>
<dbReference type="SUPFAM" id="SSF47323">
    <property type="entry name" value="Anticodon-binding domain of a subclass of class I aminoacyl-tRNA synthetases"/>
    <property type="match status" value="1"/>
</dbReference>
<dbReference type="SUPFAM" id="SSF57770">
    <property type="entry name" value="Methionyl-tRNA synthetase (MetRS), Zn-domain"/>
    <property type="match status" value="1"/>
</dbReference>
<dbReference type="SUPFAM" id="SSF52374">
    <property type="entry name" value="Nucleotidylyl transferase"/>
    <property type="match status" value="1"/>
</dbReference>
<evidence type="ECO:0000255" key="1">
    <source>
        <dbReference type="HAMAP-Rule" id="MF_00098"/>
    </source>
</evidence>